<keyword id="KW-0342">GTP-binding</keyword>
<keyword id="KW-0378">Hydrolase</keyword>
<keyword id="KW-0479">Metal-binding</keyword>
<keyword id="KW-0547">Nucleotide-binding</keyword>
<keyword id="KW-0686">Riboflavin biosynthesis</keyword>
<keyword id="KW-0862">Zinc</keyword>
<dbReference type="EC" id="3.5.4.25" evidence="1"/>
<dbReference type="EMBL" id="AL513382">
    <property type="protein sequence ID" value="CAD08420.1"/>
    <property type="molecule type" value="Genomic_DNA"/>
</dbReference>
<dbReference type="EMBL" id="AE014613">
    <property type="protein sequence ID" value="AAO69251.1"/>
    <property type="molecule type" value="Genomic_DNA"/>
</dbReference>
<dbReference type="RefSeq" id="NP_455786.1">
    <property type="nucleotide sequence ID" value="NC_003198.1"/>
</dbReference>
<dbReference type="RefSeq" id="WP_001176284.1">
    <property type="nucleotide sequence ID" value="NZ_WSUR01000006.1"/>
</dbReference>
<dbReference type="SMR" id="P66031"/>
<dbReference type="STRING" id="220341.gene:17585300"/>
<dbReference type="GeneID" id="66756188"/>
<dbReference type="KEGG" id="stt:t1624"/>
<dbReference type="KEGG" id="sty:STY1340"/>
<dbReference type="PATRIC" id="fig|220341.7.peg.1349"/>
<dbReference type="eggNOG" id="COG0807">
    <property type="taxonomic scope" value="Bacteria"/>
</dbReference>
<dbReference type="HOGENOM" id="CLU_020273_2_1_6"/>
<dbReference type="OMA" id="CRDQLEA"/>
<dbReference type="OrthoDB" id="9793111at2"/>
<dbReference type="UniPathway" id="UPA00275">
    <property type="reaction ID" value="UER00400"/>
</dbReference>
<dbReference type="Proteomes" id="UP000000541">
    <property type="component" value="Chromosome"/>
</dbReference>
<dbReference type="Proteomes" id="UP000002670">
    <property type="component" value="Chromosome"/>
</dbReference>
<dbReference type="GO" id="GO:0005829">
    <property type="term" value="C:cytosol"/>
    <property type="evidence" value="ECO:0007669"/>
    <property type="project" value="TreeGrafter"/>
</dbReference>
<dbReference type="GO" id="GO:0005525">
    <property type="term" value="F:GTP binding"/>
    <property type="evidence" value="ECO:0007669"/>
    <property type="project" value="UniProtKB-KW"/>
</dbReference>
<dbReference type="GO" id="GO:0003935">
    <property type="term" value="F:GTP cyclohydrolase II activity"/>
    <property type="evidence" value="ECO:0007669"/>
    <property type="project" value="UniProtKB-UniRule"/>
</dbReference>
<dbReference type="GO" id="GO:0008270">
    <property type="term" value="F:zinc ion binding"/>
    <property type="evidence" value="ECO:0007669"/>
    <property type="project" value="UniProtKB-UniRule"/>
</dbReference>
<dbReference type="GO" id="GO:0009231">
    <property type="term" value="P:riboflavin biosynthetic process"/>
    <property type="evidence" value="ECO:0007669"/>
    <property type="project" value="UniProtKB-UniRule"/>
</dbReference>
<dbReference type="CDD" id="cd00641">
    <property type="entry name" value="GTP_cyclohydro2"/>
    <property type="match status" value="1"/>
</dbReference>
<dbReference type="FunFam" id="3.40.50.10990:FF:000002">
    <property type="entry name" value="GTP cyclohydrolase-2"/>
    <property type="match status" value="1"/>
</dbReference>
<dbReference type="Gene3D" id="3.40.50.10990">
    <property type="entry name" value="GTP cyclohydrolase II"/>
    <property type="match status" value="1"/>
</dbReference>
<dbReference type="HAMAP" id="MF_00179">
    <property type="entry name" value="RibA"/>
    <property type="match status" value="1"/>
</dbReference>
<dbReference type="InterPro" id="IPR032677">
    <property type="entry name" value="GTP_cyclohydro_II"/>
</dbReference>
<dbReference type="InterPro" id="IPR000926">
    <property type="entry name" value="RibA"/>
</dbReference>
<dbReference type="InterPro" id="IPR036144">
    <property type="entry name" value="RibA-like_sf"/>
</dbReference>
<dbReference type="NCBIfam" id="NF001591">
    <property type="entry name" value="PRK00393.1"/>
    <property type="match status" value="1"/>
</dbReference>
<dbReference type="NCBIfam" id="TIGR00505">
    <property type="entry name" value="ribA"/>
    <property type="match status" value="1"/>
</dbReference>
<dbReference type="PANTHER" id="PTHR21327:SF18">
    <property type="entry name" value="3,4-DIHYDROXY-2-BUTANONE 4-PHOSPHATE SYNTHASE"/>
    <property type="match status" value="1"/>
</dbReference>
<dbReference type="PANTHER" id="PTHR21327">
    <property type="entry name" value="GTP CYCLOHYDROLASE II-RELATED"/>
    <property type="match status" value="1"/>
</dbReference>
<dbReference type="Pfam" id="PF00925">
    <property type="entry name" value="GTP_cyclohydro2"/>
    <property type="match status" value="1"/>
</dbReference>
<dbReference type="SUPFAM" id="SSF142695">
    <property type="entry name" value="RibA-like"/>
    <property type="match status" value="1"/>
</dbReference>
<gene>
    <name evidence="1" type="primary">ribA</name>
    <name type="ordered locus">STY1340</name>
    <name type="ordered locus">t1624</name>
</gene>
<accession>P66031</accession>
<accession>Q8XFY7</accession>
<evidence type="ECO:0000255" key="1">
    <source>
        <dbReference type="HAMAP-Rule" id="MF_00179"/>
    </source>
</evidence>
<sequence length="196" mass="21635">MQLKRVAEAKLPTPLGDFLMVGFEELATGHDHAALVFGDISGKTPVLARVHSECLTGDALFSLRCDCGFQLEAALTHIAEEGRGILIYHRQEGRNIGLLNKIRAYALQDQGYDTVEANHQLGFAADERDFTLCADMFKLLGVDEVRLLTNNPKKVEILTEAGINIVERVPLIVGRNPNNEHYLDTKAAKMGHLLSK</sequence>
<feature type="chain" id="PRO_0000151773" description="GTP cyclohydrolase-2">
    <location>
        <begin position="1"/>
        <end position="196"/>
    </location>
</feature>
<feature type="active site" description="Proton acceptor" evidence="1">
    <location>
        <position position="126"/>
    </location>
</feature>
<feature type="active site" description="Nucleophile" evidence="1">
    <location>
        <position position="128"/>
    </location>
</feature>
<feature type="binding site" evidence="1">
    <location>
        <begin position="49"/>
        <end position="53"/>
    </location>
    <ligand>
        <name>GTP</name>
        <dbReference type="ChEBI" id="CHEBI:37565"/>
    </ligand>
</feature>
<feature type="binding site" evidence="1">
    <location>
        <position position="54"/>
    </location>
    <ligand>
        <name>Zn(2+)</name>
        <dbReference type="ChEBI" id="CHEBI:29105"/>
        <note>catalytic</note>
    </ligand>
</feature>
<feature type="binding site" evidence="1">
    <location>
        <position position="65"/>
    </location>
    <ligand>
        <name>Zn(2+)</name>
        <dbReference type="ChEBI" id="CHEBI:29105"/>
        <note>catalytic</note>
    </ligand>
</feature>
<feature type="binding site" evidence="1">
    <location>
        <position position="67"/>
    </location>
    <ligand>
        <name>Zn(2+)</name>
        <dbReference type="ChEBI" id="CHEBI:29105"/>
        <note>catalytic</note>
    </ligand>
</feature>
<feature type="binding site" evidence="1">
    <location>
        <position position="70"/>
    </location>
    <ligand>
        <name>GTP</name>
        <dbReference type="ChEBI" id="CHEBI:37565"/>
    </ligand>
</feature>
<feature type="binding site" evidence="1">
    <location>
        <begin position="92"/>
        <end position="94"/>
    </location>
    <ligand>
        <name>GTP</name>
        <dbReference type="ChEBI" id="CHEBI:37565"/>
    </ligand>
</feature>
<feature type="binding site" evidence="1">
    <location>
        <position position="114"/>
    </location>
    <ligand>
        <name>GTP</name>
        <dbReference type="ChEBI" id="CHEBI:37565"/>
    </ligand>
</feature>
<feature type="binding site" evidence="1">
    <location>
        <position position="149"/>
    </location>
    <ligand>
        <name>GTP</name>
        <dbReference type="ChEBI" id="CHEBI:37565"/>
    </ligand>
</feature>
<feature type="binding site" evidence="1">
    <location>
        <position position="154"/>
    </location>
    <ligand>
        <name>GTP</name>
        <dbReference type="ChEBI" id="CHEBI:37565"/>
    </ligand>
</feature>
<organism>
    <name type="scientific">Salmonella typhi</name>
    <dbReference type="NCBI Taxonomy" id="90370"/>
    <lineage>
        <taxon>Bacteria</taxon>
        <taxon>Pseudomonadati</taxon>
        <taxon>Pseudomonadota</taxon>
        <taxon>Gammaproteobacteria</taxon>
        <taxon>Enterobacterales</taxon>
        <taxon>Enterobacteriaceae</taxon>
        <taxon>Salmonella</taxon>
    </lineage>
</organism>
<name>RIBA_SALTI</name>
<comment type="function">
    <text evidence="1">Catalyzes the conversion of GTP to 2,5-diamino-6-ribosylamino-4(3H)-pyrimidinone 5'-phosphate (DARP), formate and pyrophosphate.</text>
</comment>
<comment type="catalytic activity">
    <reaction evidence="1">
        <text>GTP + 4 H2O = 2,5-diamino-6-hydroxy-4-(5-phosphoribosylamino)-pyrimidine + formate + 2 phosphate + 3 H(+)</text>
        <dbReference type="Rhea" id="RHEA:23704"/>
        <dbReference type="ChEBI" id="CHEBI:15377"/>
        <dbReference type="ChEBI" id="CHEBI:15378"/>
        <dbReference type="ChEBI" id="CHEBI:15740"/>
        <dbReference type="ChEBI" id="CHEBI:37565"/>
        <dbReference type="ChEBI" id="CHEBI:43474"/>
        <dbReference type="ChEBI" id="CHEBI:58614"/>
        <dbReference type="EC" id="3.5.4.25"/>
    </reaction>
</comment>
<comment type="cofactor">
    <cofactor evidence="1">
        <name>Zn(2+)</name>
        <dbReference type="ChEBI" id="CHEBI:29105"/>
    </cofactor>
    <text evidence="1">Binds 1 zinc ion per subunit.</text>
</comment>
<comment type="pathway">
    <text evidence="1">Cofactor biosynthesis; riboflavin biosynthesis; 5-amino-6-(D-ribitylamino)uracil from GTP: step 1/4.</text>
</comment>
<comment type="subunit">
    <text evidence="1">Homodimer.</text>
</comment>
<comment type="similarity">
    <text evidence="1">Belongs to the GTP cyclohydrolase II family.</text>
</comment>
<protein>
    <recommendedName>
        <fullName evidence="1">GTP cyclohydrolase-2</fullName>
        <ecNumber evidence="1">3.5.4.25</ecNumber>
    </recommendedName>
    <alternativeName>
        <fullName evidence="1">GTP cyclohydrolase II</fullName>
    </alternativeName>
</protein>
<proteinExistence type="inferred from homology"/>
<reference key="1">
    <citation type="journal article" date="2001" name="Nature">
        <title>Complete genome sequence of a multiple drug resistant Salmonella enterica serovar Typhi CT18.</title>
        <authorList>
            <person name="Parkhill J."/>
            <person name="Dougan G."/>
            <person name="James K.D."/>
            <person name="Thomson N.R."/>
            <person name="Pickard D."/>
            <person name="Wain J."/>
            <person name="Churcher C.M."/>
            <person name="Mungall K.L."/>
            <person name="Bentley S.D."/>
            <person name="Holden M.T.G."/>
            <person name="Sebaihia M."/>
            <person name="Baker S."/>
            <person name="Basham D."/>
            <person name="Brooks K."/>
            <person name="Chillingworth T."/>
            <person name="Connerton P."/>
            <person name="Cronin A."/>
            <person name="Davis P."/>
            <person name="Davies R.M."/>
            <person name="Dowd L."/>
            <person name="White N."/>
            <person name="Farrar J."/>
            <person name="Feltwell T."/>
            <person name="Hamlin N."/>
            <person name="Haque A."/>
            <person name="Hien T.T."/>
            <person name="Holroyd S."/>
            <person name="Jagels K."/>
            <person name="Krogh A."/>
            <person name="Larsen T.S."/>
            <person name="Leather S."/>
            <person name="Moule S."/>
            <person name="O'Gaora P."/>
            <person name="Parry C."/>
            <person name="Quail M.A."/>
            <person name="Rutherford K.M."/>
            <person name="Simmonds M."/>
            <person name="Skelton J."/>
            <person name="Stevens K."/>
            <person name="Whitehead S."/>
            <person name="Barrell B.G."/>
        </authorList>
    </citation>
    <scope>NUCLEOTIDE SEQUENCE [LARGE SCALE GENOMIC DNA]</scope>
    <source>
        <strain>CT18</strain>
    </source>
</reference>
<reference key="2">
    <citation type="journal article" date="2003" name="J. Bacteriol.">
        <title>Comparative genomics of Salmonella enterica serovar Typhi strains Ty2 and CT18.</title>
        <authorList>
            <person name="Deng W."/>
            <person name="Liou S.-R."/>
            <person name="Plunkett G. III"/>
            <person name="Mayhew G.F."/>
            <person name="Rose D.J."/>
            <person name="Burland V."/>
            <person name="Kodoyianni V."/>
            <person name="Schwartz D.C."/>
            <person name="Blattner F.R."/>
        </authorList>
    </citation>
    <scope>NUCLEOTIDE SEQUENCE [LARGE SCALE GENOMIC DNA]</scope>
    <source>
        <strain>ATCC 700931 / Ty2</strain>
    </source>
</reference>